<comment type="function">
    <text evidence="3 6">This recombinant protein induces severe neurotoxicity on zebrafish larvae (Danio rerio) at a concentration of 230 mg/ml, but does not show toxicity when injected in blowfly larvae (Sarcophaga falculata). All fish incubated with this protein died within 16 hours of exposure (PubMed:25757852). Has also been claimed to be implied in calcification, but this function seems improbable (PubMed:19283069, PubMed:25757852).</text>
</comment>
<comment type="subcellular location">
    <subcellularLocation>
        <location>Secreted</location>
    </subcellularLocation>
    <subcellularLocation>
        <location evidence="5">Nematocyst</location>
    </subcellularLocation>
</comment>
<comment type="PTM">
    <text evidence="5">Contains 4 disulfide bonds.</text>
</comment>
<comment type="similarity">
    <text evidence="7">Belongs to the Cnidaria small cysteine-rich protein (SCRiP) family. alpha subfamily.</text>
</comment>
<organism>
    <name type="scientific">Acropora millepora</name>
    <name type="common">Staghorn coral</name>
    <name type="synonym">Heteropora millepora</name>
    <dbReference type="NCBI Taxonomy" id="45264"/>
    <lineage>
        <taxon>Eukaryota</taxon>
        <taxon>Metazoa</taxon>
        <taxon>Cnidaria</taxon>
        <taxon>Anthozoa</taxon>
        <taxon>Hexacorallia</taxon>
        <taxon>Scleractinia</taxon>
        <taxon>Astrocoeniina</taxon>
        <taxon>Acroporidae</taxon>
        <taxon>Acropora</taxon>
    </lineage>
</organism>
<dbReference type="EMBL" id="BK006536">
    <property type="protein sequence ID" value="DAA06484.1"/>
    <property type="molecule type" value="mRNA"/>
</dbReference>
<dbReference type="SMR" id="C0H692"/>
<dbReference type="OrthoDB" id="10279392at2759"/>
<dbReference type="GO" id="GO:0005576">
    <property type="term" value="C:extracellular region"/>
    <property type="evidence" value="ECO:0007669"/>
    <property type="project" value="UniProtKB-SubCell"/>
</dbReference>
<dbReference type="GO" id="GO:0042151">
    <property type="term" value="C:nematocyst"/>
    <property type="evidence" value="ECO:0007669"/>
    <property type="project" value="UniProtKB-SubCell"/>
</dbReference>
<dbReference type="GO" id="GO:0090729">
    <property type="term" value="F:toxin activity"/>
    <property type="evidence" value="ECO:0007669"/>
    <property type="project" value="UniProtKB-KW"/>
</dbReference>
<proteinExistence type="inferred from homology"/>
<sequence>MGVKLNICLLLLLVAIISSQGFNLRKKEDSKDEKPFGNYRRGSPCSNYEGSCTPNHIPCPPGSHECRQLPGCYPGVERCCCQY</sequence>
<protein>
    <recommendedName>
        <fullName evidence="4">Small cysteine-rich protein 3</fullName>
        <shortName evidence="4">Amil-SCRiP3</shortName>
        <shortName evidence="4">SCRiP3</shortName>
    </recommendedName>
</protein>
<accession>C0H692</accession>
<reference key="1">
    <citation type="journal article" date="2009" name="PLoS ONE">
        <title>Identification and gene expression analysis of a taxonomically restricted cysteine-rich protein family in reef-building corals.</title>
        <authorList>
            <person name="Sunagawa S."/>
            <person name="DeSalvo M.K."/>
            <person name="Voolstra C.R."/>
            <person name="Reyes-Bermudez A."/>
            <person name="Medina M."/>
        </authorList>
    </citation>
    <scope>NUCLEOTIDE SEQUENCE [MRNA]</scope>
</reference>
<reference key="2">
    <citation type="journal article" date="2015" name="Mol. Biol. Evol.">
        <title>Evolution of an ancient venom: recognition of a novel family of cnidarian toxins and the common evolutionary origin of sodium and potassium neurotoxins in sea anemone.</title>
        <authorList>
            <person name="Jouiaei M."/>
            <person name="Sunagar K."/>
            <person name="Federman Gross A."/>
            <person name="Scheib H."/>
            <person name="Alewood P.F."/>
            <person name="Moran Y."/>
            <person name="Fry B.G."/>
        </authorList>
    </citation>
    <scope>FUNCTION</scope>
</reference>
<reference key="3">
    <citation type="journal article" date="2024" name="Toxins">
        <title>Evolutionary analysis of cnidaria small cysteine-rich proteins (scrips), an enigmatic neurotoxin family from stony corals and sea anemones (Anthozoa: Hexacorallia).</title>
        <authorList>
            <person name="Barroso R.A."/>
            <person name="Ramos L."/>
            <person name="Moreno H."/>
            <person name="Antunes A."/>
        </authorList>
    </citation>
    <scope>NOMENCLATURE</scope>
</reference>
<keyword id="KW-0165">Cleavage on pair of basic residues</keyword>
<keyword id="KW-1015">Disulfide bond</keyword>
<keyword id="KW-0166">Nematocyst</keyword>
<keyword id="KW-0528">Neurotoxin</keyword>
<keyword id="KW-0964">Secreted</keyword>
<keyword id="KW-0732">Signal</keyword>
<keyword id="KW-0800">Toxin</keyword>
<name>SCR3A_ACRMI</name>
<evidence type="ECO:0000255" key="1"/>
<evidence type="ECO:0000256" key="2">
    <source>
        <dbReference type="SAM" id="MobiDB-lite"/>
    </source>
</evidence>
<evidence type="ECO:0000269" key="3">
    <source>
    </source>
</evidence>
<evidence type="ECO:0000303" key="4">
    <source>
    </source>
</evidence>
<evidence type="ECO:0000305" key="5"/>
<evidence type="ECO:0000305" key="6">
    <source>
    </source>
</evidence>
<evidence type="ECO:0000305" key="7">
    <source>
    </source>
</evidence>
<feature type="signal peptide" evidence="1">
    <location>
        <begin position="1"/>
        <end position="21"/>
    </location>
</feature>
<feature type="propeptide" id="PRO_0000434299" evidence="5">
    <location>
        <begin position="22"/>
        <end position="39"/>
    </location>
</feature>
<feature type="chain" id="PRO_0000434300" description="Small cysteine-rich protein 3">
    <location>
        <begin position="42"/>
        <end position="83"/>
    </location>
</feature>
<feature type="region of interest" description="Disordered" evidence="2">
    <location>
        <begin position="25"/>
        <end position="44"/>
    </location>
</feature>
<feature type="compositionally biased region" description="Basic and acidic residues" evidence="2">
    <location>
        <begin position="25"/>
        <end position="35"/>
    </location>
</feature>